<name>PPAC_STRPG</name>
<accession>A2RG81</accession>
<protein>
    <recommendedName>
        <fullName evidence="1">Probable manganese-dependent inorganic pyrophosphatase</fullName>
        <ecNumber evidence="1">3.6.1.1</ecNumber>
    </recommendedName>
    <alternativeName>
        <fullName evidence="1">Pyrophosphate phospho-hydrolase</fullName>
        <shortName evidence="1">PPase</shortName>
    </alternativeName>
</protein>
<gene>
    <name evidence="1" type="primary">ppaC</name>
    <name type="ordered locus">SpyM51539</name>
</gene>
<evidence type="ECO:0000255" key="1">
    <source>
        <dbReference type="HAMAP-Rule" id="MF_00207"/>
    </source>
</evidence>
<feature type="chain" id="PRO_1000012326" description="Probable manganese-dependent inorganic pyrophosphatase">
    <location>
        <begin position="1"/>
        <end position="311"/>
    </location>
</feature>
<feature type="binding site" evidence="1">
    <location>
        <position position="9"/>
    </location>
    <ligand>
        <name>Mn(2+)</name>
        <dbReference type="ChEBI" id="CHEBI:29035"/>
        <label>1</label>
    </ligand>
</feature>
<feature type="binding site" evidence="1">
    <location>
        <position position="13"/>
    </location>
    <ligand>
        <name>Mn(2+)</name>
        <dbReference type="ChEBI" id="CHEBI:29035"/>
        <label>1</label>
    </ligand>
</feature>
<feature type="binding site" evidence="1">
    <location>
        <position position="15"/>
    </location>
    <ligand>
        <name>Mn(2+)</name>
        <dbReference type="ChEBI" id="CHEBI:29035"/>
        <label>2</label>
    </ligand>
</feature>
<feature type="binding site" evidence="1">
    <location>
        <position position="77"/>
    </location>
    <ligand>
        <name>Mn(2+)</name>
        <dbReference type="ChEBI" id="CHEBI:29035"/>
        <label>1</label>
    </ligand>
</feature>
<feature type="binding site" evidence="1">
    <location>
        <position position="77"/>
    </location>
    <ligand>
        <name>Mn(2+)</name>
        <dbReference type="ChEBI" id="CHEBI:29035"/>
        <label>2</label>
    </ligand>
</feature>
<feature type="binding site" evidence="1">
    <location>
        <position position="99"/>
    </location>
    <ligand>
        <name>Mn(2+)</name>
        <dbReference type="ChEBI" id="CHEBI:29035"/>
        <label>2</label>
    </ligand>
</feature>
<feature type="binding site" evidence="1">
    <location>
        <position position="151"/>
    </location>
    <ligand>
        <name>Mn(2+)</name>
        <dbReference type="ChEBI" id="CHEBI:29035"/>
        <label>2</label>
    </ligand>
</feature>
<reference key="1">
    <citation type="journal article" date="2007" name="J. Bacteriol.">
        <title>Complete genome of acute rheumatic fever-associated serotype M5 Streptococcus pyogenes strain Manfredo.</title>
        <authorList>
            <person name="Holden M.T.G."/>
            <person name="Scott A."/>
            <person name="Cherevach I."/>
            <person name="Chillingworth T."/>
            <person name="Churcher C."/>
            <person name="Cronin A."/>
            <person name="Dowd L."/>
            <person name="Feltwell T."/>
            <person name="Hamlin N."/>
            <person name="Holroyd S."/>
            <person name="Jagels K."/>
            <person name="Moule S."/>
            <person name="Mungall K."/>
            <person name="Quail M.A."/>
            <person name="Price C."/>
            <person name="Rabbinowitsch E."/>
            <person name="Sharp S."/>
            <person name="Skelton J."/>
            <person name="Whitehead S."/>
            <person name="Barrell B.G."/>
            <person name="Kehoe M."/>
            <person name="Parkhill J."/>
        </authorList>
    </citation>
    <scope>NUCLEOTIDE SEQUENCE [LARGE SCALE GENOMIC DNA]</scope>
    <source>
        <strain>Manfredo</strain>
    </source>
</reference>
<comment type="catalytic activity">
    <reaction evidence="1">
        <text>diphosphate + H2O = 2 phosphate + H(+)</text>
        <dbReference type="Rhea" id="RHEA:24576"/>
        <dbReference type="ChEBI" id="CHEBI:15377"/>
        <dbReference type="ChEBI" id="CHEBI:15378"/>
        <dbReference type="ChEBI" id="CHEBI:33019"/>
        <dbReference type="ChEBI" id="CHEBI:43474"/>
        <dbReference type="EC" id="3.6.1.1"/>
    </reaction>
</comment>
<comment type="cofactor">
    <cofactor evidence="1">
        <name>Mn(2+)</name>
        <dbReference type="ChEBI" id="CHEBI:29035"/>
    </cofactor>
    <text evidence="1">Binds 2 manganese ions per subunit.</text>
</comment>
<comment type="subcellular location">
    <subcellularLocation>
        <location evidence="1">Cytoplasm</location>
    </subcellularLocation>
</comment>
<comment type="similarity">
    <text evidence="1">Belongs to the PPase class C family.</text>
</comment>
<organism>
    <name type="scientific">Streptococcus pyogenes serotype M5 (strain Manfredo)</name>
    <dbReference type="NCBI Taxonomy" id="160491"/>
    <lineage>
        <taxon>Bacteria</taxon>
        <taxon>Bacillati</taxon>
        <taxon>Bacillota</taxon>
        <taxon>Bacilli</taxon>
        <taxon>Lactobacillales</taxon>
        <taxon>Streptococcaceae</taxon>
        <taxon>Streptococcus</taxon>
    </lineage>
</organism>
<proteinExistence type="inferred from homology"/>
<keyword id="KW-0963">Cytoplasm</keyword>
<keyword id="KW-0378">Hydrolase</keyword>
<keyword id="KW-0464">Manganese</keyword>
<keyword id="KW-0479">Metal-binding</keyword>
<dbReference type="EC" id="3.6.1.1" evidence="1"/>
<dbReference type="EMBL" id="AM295007">
    <property type="protein sequence ID" value="CAM30860.1"/>
    <property type="molecule type" value="Genomic_DNA"/>
</dbReference>
<dbReference type="RefSeq" id="WP_002990948.1">
    <property type="nucleotide sequence ID" value="NC_009332.1"/>
</dbReference>
<dbReference type="SMR" id="A2RG81"/>
<dbReference type="KEGG" id="spf:SpyM51539"/>
<dbReference type="HOGENOM" id="CLU_025243_0_1_9"/>
<dbReference type="GO" id="GO:0005737">
    <property type="term" value="C:cytoplasm"/>
    <property type="evidence" value="ECO:0007669"/>
    <property type="project" value="UniProtKB-SubCell"/>
</dbReference>
<dbReference type="GO" id="GO:0004427">
    <property type="term" value="F:inorganic diphosphate phosphatase activity"/>
    <property type="evidence" value="ECO:0007669"/>
    <property type="project" value="UniProtKB-UniRule"/>
</dbReference>
<dbReference type="GO" id="GO:0030145">
    <property type="term" value="F:manganese ion binding"/>
    <property type="evidence" value="ECO:0007669"/>
    <property type="project" value="UniProtKB-UniRule"/>
</dbReference>
<dbReference type="FunFam" id="3.10.310.20:FF:000001">
    <property type="entry name" value="Probable manganese-dependent inorganic pyrophosphatase"/>
    <property type="match status" value="1"/>
</dbReference>
<dbReference type="FunFam" id="3.90.1640.10:FF:000001">
    <property type="entry name" value="Probable manganese-dependent inorganic pyrophosphatase"/>
    <property type="match status" value="1"/>
</dbReference>
<dbReference type="Gene3D" id="3.10.310.20">
    <property type="entry name" value="DHHA2 domain"/>
    <property type="match status" value="1"/>
</dbReference>
<dbReference type="Gene3D" id="3.90.1640.10">
    <property type="entry name" value="inorganic pyrophosphatase (n-terminal core)"/>
    <property type="match status" value="1"/>
</dbReference>
<dbReference type="HAMAP" id="MF_00207">
    <property type="entry name" value="PPase_C"/>
    <property type="match status" value="1"/>
</dbReference>
<dbReference type="InterPro" id="IPR001667">
    <property type="entry name" value="DDH_dom"/>
</dbReference>
<dbReference type="InterPro" id="IPR038763">
    <property type="entry name" value="DHH_sf"/>
</dbReference>
<dbReference type="InterPro" id="IPR004097">
    <property type="entry name" value="DHHA2"/>
</dbReference>
<dbReference type="InterPro" id="IPR038222">
    <property type="entry name" value="DHHA2_dom_sf"/>
</dbReference>
<dbReference type="InterPro" id="IPR022934">
    <property type="entry name" value="Mn-dep_inorganic_PyrPase"/>
</dbReference>
<dbReference type="InterPro" id="IPR051319">
    <property type="entry name" value="Oligoribo/pAp-PDE_c-di-AMP_PDE"/>
</dbReference>
<dbReference type="NCBIfam" id="NF003877">
    <property type="entry name" value="PRK05427.1"/>
    <property type="match status" value="1"/>
</dbReference>
<dbReference type="PANTHER" id="PTHR47618">
    <property type="entry name" value="BIFUNCTIONAL OLIGORIBONUCLEASE AND PAP PHOSPHATASE NRNA"/>
    <property type="match status" value="1"/>
</dbReference>
<dbReference type="PANTHER" id="PTHR47618:SF1">
    <property type="entry name" value="BIFUNCTIONAL OLIGORIBONUCLEASE AND PAP PHOSPHATASE NRNA"/>
    <property type="match status" value="1"/>
</dbReference>
<dbReference type="Pfam" id="PF01368">
    <property type="entry name" value="DHH"/>
    <property type="match status" value="1"/>
</dbReference>
<dbReference type="Pfam" id="PF02833">
    <property type="entry name" value="DHHA2"/>
    <property type="match status" value="1"/>
</dbReference>
<dbReference type="SMART" id="SM01131">
    <property type="entry name" value="DHHA2"/>
    <property type="match status" value="1"/>
</dbReference>
<dbReference type="SUPFAM" id="SSF64182">
    <property type="entry name" value="DHH phosphoesterases"/>
    <property type="match status" value="1"/>
</dbReference>
<sequence length="311" mass="33617">MSKILVFGHQNPDTDAIASSYAFDYLSQKAFGLDTEVVALGTPNEETAFALDYFGVEAPRVVESAKAQGSEQVILTDHNEFQQSIADIREVEVYGVVDHHRVANFETANPLYMRVEPVGSASSIVYRMFKENGIEVPKAIAGMLLSGLISDTLLLKSPTTHVSDHLVAEELAELAEVNLEDYGMALLKAGTNLASKSEVELIGIDAKTFELNGNAVRVAQVNTVDIAEVLERQEAIEAAIKDAMAAEGYSDFVLMITDIVNSNSEILAIGANMDKVEAAFNFTLDNNHAFLAGAVSRKKQVVPQLTESFGA</sequence>